<dbReference type="EC" id="2.3.1.-" evidence="12"/>
<dbReference type="EMBL" id="AAHF01000017">
    <property type="protein sequence ID" value="EAL84397.1"/>
    <property type="molecule type" value="Genomic_DNA"/>
</dbReference>
<dbReference type="RefSeq" id="XP_746435.1">
    <property type="nucleotide sequence ID" value="XM_741342.1"/>
</dbReference>
<dbReference type="SMR" id="Q4W944"/>
<dbReference type="STRING" id="330879.Q4W944"/>
<dbReference type="EnsemblFungi" id="EAL84397">
    <property type="protein sequence ID" value="EAL84397"/>
    <property type="gene ID" value="AFUA_4G00210"/>
</dbReference>
<dbReference type="GeneID" id="3503726"/>
<dbReference type="KEGG" id="afm:AFUA_4G00210"/>
<dbReference type="VEuPathDB" id="FungiDB:Afu4g00210"/>
<dbReference type="eggNOG" id="KOG1202">
    <property type="taxonomic scope" value="Eukaryota"/>
</dbReference>
<dbReference type="HOGENOM" id="CLU_000022_6_0_1"/>
<dbReference type="InParanoid" id="Q4W944"/>
<dbReference type="OMA" id="IALCRLW"/>
<dbReference type="OrthoDB" id="329835at2759"/>
<dbReference type="Proteomes" id="UP000002530">
    <property type="component" value="Chromosome 4"/>
</dbReference>
<dbReference type="GO" id="GO:0004312">
    <property type="term" value="F:fatty acid synthase activity"/>
    <property type="evidence" value="ECO:0000318"/>
    <property type="project" value="GO_Central"/>
</dbReference>
<dbReference type="GO" id="GO:1900602">
    <property type="term" value="P:endocrocin biosynthetic process"/>
    <property type="evidence" value="ECO:0000315"/>
    <property type="project" value="AspGD"/>
</dbReference>
<dbReference type="GO" id="GO:0006633">
    <property type="term" value="P:fatty acid biosynthetic process"/>
    <property type="evidence" value="ECO:0000318"/>
    <property type="project" value="GO_Central"/>
</dbReference>
<dbReference type="GO" id="GO:0019748">
    <property type="term" value="P:secondary metabolic process"/>
    <property type="evidence" value="ECO:0000303"/>
    <property type="project" value="AspGD"/>
</dbReference>
<dbReference type="GO" id="GO:0044550">
    <property type="term" value="P:secondary metabolite biosynthetic process"/>
    <property type="evidence" value="ECO:0000318"/>
    <property type="project" value="GO_Central"/>
</dbReference>
<dbReference type="CDD" id="cd00833">
    <property type="entry name" value="PKS"/>
    <property type="match status" value="1"/>
</dbReference>
<dbReference type="FunFam" id="3.40.366.10:FF:000017">
    <property type="entry name" value="Non-reducing polyketide synthase aptA"/>
    <property type="match status" value="1"/>
</dbReference>
<dbReference type="FunFam" id="3.40.366.10:FF:000002">
    <property type="entry name" value="Probable polyketide synthase 2"/>
    <property type="match status" value="1"/>
</dbReference>
<dbReference type="FunFam" id="1.10.1200.10:FF:000011">
    <property type="entry name" value="Sterigmatocystin biosynthesis polyketide synthase"/>
    <property type="match status" value="1"/>
</dbReference>
<dbReference type="FunFam" id="3.10.129.110:FF:000001">
    <property type="entry name" value="Sterigmatocystin biosynthesis polyketide synthase"/>
    <property type="match status" value="1"/>
</dbReference>
<dbReference type="FunFam" id="3.40.47.10:FF:000031">
    <property type="entry name" value="Sterigmatocystin biosynthesis polyketide synthase"/>
    <property type="match status" value="1"/>
</dbReference>
<dbReference type="Gene3D" id="3.30.70.3290">
    <property type="match status" value="1"/>
</dbReference>
<dbReference type="Gene3D" id="3.40.47.10">
    <property type="match status" value="1"/>
</dbReference>
<dbReference type="Gene3D" id="1.10.1200.10">
    <property type="entry name" value="ACP-like"/>
    <property type="match status" value="1"/>
</dbReference>
<dbReference type="Gene3D" id="3.40.366.10">
    <property type="entry name" value="Malonyl-Coenzyme A Acyl Carrier Protein, domain 2"/>
    <property type="match status" value="2"/>
</dbReference>
<dbReference type="Gene3D" id="3.10.129.110">
    <property type="entry name" value="Polyketide synthase dehydratase"/>
    <property type="match status" value="1"/>
</dbReference>
<dbReference type="InterPro" id="IPR001227">
    <property type="entry name" value="Ac_transferase_dom_sf"/>
</dbReference>
<dbReference type="InterPro" id="IPR036736">
    <property type="entry name" value="ACP-like_sf"/>
</dbReference>
<dbReference type="InterPro" id="IPR014043">
    <property type="entry name" value="Acyl_transferase_dom"/>
</dbReference>
<dbReference type="InterPro" id="IPR016035">
    <property type="entry name" value="Acyl_Trfase/lysoPLipase"/>
</dbReference>
<dbReference type="InterPro" id="IPR014031">
    <property type="entry name" value="Ketoacyl_synth_C"/>
</dbReference>
<dbReference type="InterPro" id="IPR014030">
    <property type="entry name" value="Ketoacyl_synth_N"/>
</dbReference>
<dbReference type="InterPro" id="IPR016036">
    <property type="entry name" value="Malonyl_transacylase_ACP-bd"/>
</dbReference>
<dbReference type="InterPro" id="IPR020841">
    <property type="entry name" value="PKS_Beta-ketoAc_synthase_dom"/>
</dbReference>
<dbReference type="InterPro" id="IPR042104">
    <property type="entry name" value="PKS_dehydratase_sf"/>
</dbReference>
<dbReference type="InterPro" id="IPR049900">
    <property type="entry name" value="PKS_mFAS_DH"/>
</dbReference>
<dbReference type="InterPro" id="IPR050091">
    <property type="entry name" value="PKS_NRPS_Biosynth_Enz"/>
</dbReference>
<dbReference type="InterPro" id="IPR009081">
    <property type="entry name" value="PP-bd_ACP"/>
</dbReference>
<dbReference type="InterPro" id="IPR030918">
    <property type="entry name" value="PT_fungal_PKS"/>
</dbReference>
<dbReference type="InterPro" id="IPR032088">
    <property type="entry name" value="SAT"/>
</dbReference>
<dbReference type="InterPro" id="IPR016039">
    <property type="entry name" value="Thiolase-like"/>
</dbReference>
<dbReference type="NCBIfam" id="TIGR04532">
    <property type="entry name" value="PT_fungal_PKS"/>
    <property type="match status" value="1"/>
</dbReference>
<dbReference type="PANTHER" id="PTHR43775">
    <property type="entry name" value="FATTY ACID SYNTHASE"/>
    <property type="match status" value="1"/>
</dbReference>
<dbReference type="PANTHER" id="PTHR43775:SF37">
    <property type="entry name" value="SI:DKEY-61P9.11"/>
    <property type="match status" value="1"/>
</dbReference>
<dbReference type="Pfam" id="PF00698">
    <property type="entry name" value="Acyl_transf_1"/>
    <property type="match status" value="1"/>
</dbReference>
<dbReference type="Pfam" id="PF22621">
    <property type="entry name" value="CurL-like_PKS_C"/>
    <property type="match status" value="1"/>
</dbReference>
<dbReference type="Pfam" id="PF00109">
    <property type="entry name" value="ketoacyl-synt"/>
    <property type="match status" value="1"/>
</dbReference>
<dbReference type="Pfam" id="PF02801">
    <property type="entry name" value="Ketoacyl-synt_C"/>
    <property type="match status" value="1"/>
</dbReference>
<dbReference type="Pfam" id="PF00550">
    <property type="entry name" value="PP-binding"/>
    <property type="match status" value="1"/>
</dbReference>
<dbReference type="Pfam" id="PF16073">
    <property type="entry name" value="SAT"/>
    <property type="match status" value="1"/>
</dbReference>
<dbReference type="SMART" id="SM00827">
    <property type="entry name" value="PKS_AT"/>
    <property type="match status" value="1"/>
</dbReference>
<dbReference type="SMART" id="SM00825">
    <property type="entry name" value="PKS_KS"/>
    <property type="match status" value="1"/>
</dbReference>
<dbReference type="SUPFAM" id="SSF47336">
    <property type="entry name" value="ACP-like"/>
    <property type="match status" value="1"/>
</dbReference>
<dbReference type="SUPFAM" id="SSF52151">
    <property type="entry name" value="FabD/lysophospholipase-like"/>
    <property type="match status" value="1"/>
</dbReference>
<dbReference type="SUPFAM" id="SSF55048">
    <property type="entry name" value="Probable ACP-binding domain of malonyl-CoA ACP transacylase"/>
    <property type="match status" value="1"/>
</dbReference>
<dbReference type="SUPFAM" id="SSF53901">
    <property type="entry name" value="Thiolase-like"/>
    <property type="match status" value="1"/>
</dbReference>
<dbReference type="PROSITE" id="PS50075">
    <property type="entry name" value="CARRIER"/>
    <property type="match status" value="1"/>
</dbReference>
<dbReference type="PROSITE" id="PS52004">
    <property type="entry name" value="KS3_2"/>
    <property type="match status" value="1"/>
</dbReference>
<dbReference type="PROSITE" id="PS52019">
    <property type="entry name" value="PKS_MFAS_DH"/>
    <property type="match status" value="1"/>
</dbReference>
<name>ENCA_ASPFU</name>
<organism>
    <name type="scientific">Aspergillus fumigatus (strain ATCC MYA-4609 / CBS 101355 / FGSC A1100 / Af293)</name>
    <name type="common">Neosartorya fumigata</name>
    <dbReference type="NCBI Taxonomy" id="330879"/>
    <lineage>
        <taxon>Eukaryota</taxon>
        <taxon>Fungi</taxon>
        <taxon>Dikarya</taxon>
        <taxon>Ascomycota</taxon>
        <taxon>Pezizomycotina</taxon>
        <taxon>Eurotiomycetes</taxon>
        <taxon>Eurotiomycetidae</taxon>
        <taxon>Eurotiales</taxon>
        <taxon>Aspergillaceae</taxon>
        <taxon>Aspergillus</taxon>
        <taxon>Aspergillus subgen. Fumigati</taxon>
    </lineage>
</organism>
<evidence type="ECO:0000250" key="1">
    <source>
        <dbReference type="UniProtKB" id="Q5B0D0"/>
    </source>
</evidence>
<evidence type="ECO:0000255" key="2"/>
<evidence type="ECO:0000255" key="3">
    <source>
        <dbReference type="PROSITE-ProRule" id="PRU00258"/>
    </source>
</evidence>
<evidence type="ECO:0000255" key="4">
    <source>
        <dbReference type="PROSITE-ProRule" id="PRU01348"/>
    </source>
</evidence>
<evidence type="ECO:0000255" key="5">
    <source>
        <dbReference type="PROSITE-ProRule" id="PRU01363"/>
    </source>
</evidence>
<evidence type="ECO:0000256" key="6">
    <source>
        <dbReference type="SAM" id="MobiDB-lite"/>
    </source>
</evidence>
<evidence type="ECO:0000269" key="7">
    <source>
    </source>
</evidence>
<evidence type="ECO:0000269" key="8">
    <source>
    </source>
</evidence>
<evidence type="ECO:0000269" key="9">
    <source>
    </source>
</evidence>
<evidence type="ECO:0000269" key="10">
    <source>
    </source>
</evidence>
<evidence type="ECO:0000303" key="11">
    <source>
    </source>
</evidence>
<evidence type="ECO:0000305" key="12">
    <source>
    </source>
</evidence>
<evidence type="ECO:0000305" key="13">
    <source>
    </source>
</evidence>
<keyword id="KW-0511">Multifunctional enzyme</keyword>
<keyword id="KW-0596">Phosphopantetheine</keyword>
<keyword id="KW-0597">Phosphoprotein</keyword>
<keyword id="KW-1185">Reference proteome</keyword>
<keyword id="KW-0808">Transferase</keyword>
<comment type="function">
    <text evidence="8 9">Non-reducing polyketide synthase; part of the gene cluster that mediates the biosynthesis of endocrocin, a simple anthraquinone interesting for many biotechnological applications (PubMed:22492455, PubMed:23592999). The pathway begins with the synthesis of atrochrysone thioester by the polyketide synthase (PKS) encA (PubMed:22492455). The atrochrysone carboxyl ACP thioesterase encB then breaks the thioester bond and releases the atrochrysone carboxylic acid from encA (PubMed:22492455). The atrochrysone carboxylic acid is then converted to endocrocin anthrone which is further oxidized into endocrocin by the anthrone oxygenase encC (PubMed:22492455). The exact function of encD has not been identified yet, but it negatively regulates endocrocin production, likely through the modification of endocrocin itself (PubMed:22492455).</text>
</comment>
<comment type="catalytic activity">
    <reaction evidence="12">
        <text>holo-[ACP] + 8 malonyl-CoA + 8 H(+) = atrochrysone carboxyl-[ACP] + 8 CO2 + 8 CoA + 2 H2O</text>
        <dbReference type="Rhea" id="RHEA:64232"/>
        <dbReference type="Rhea" id="RHEA-COMP:9685"/>
        <dbReference type="Rhea" id="RHEA-COMP:16552"/>
        <dbReference type="ChEBI" id="CHEBI:15377"/>
        <dbReference type="ChEBI" id="CHEBI:15378"/>
        <dbReference type="ChEBI" id="CHEBI:16526"/>
        <dbReference type="ChEBI" id="CHEBI:57287"/>
        <dbReference type="ChEBI" id="CHEBI:57384"/>
        <dbReference type="ChEBI" id="CHEBI:64479"/>
        <dbReference type="ChEBI" id="CHEBI:149712"/>
    </reaction>
    <physiologicalReaction direction="left-to-right" evidence="12">
        <dbReference type="Rhea" id="RHEA:64233"/>
    </physiologicalReaction>
</comment>
<comment type="pathway">
    <text evidence="8">Secondary metabolite biosynthesis.</text>
</comment>
<comment type="tissue specificity">
    <text evidence="13">Endocrocin is specifically produced in conidia.</text>
</comment>
<comment type="induction">
    <text evidence="10">Expression is positively regulated by the transcription factors brlA and laeA (PubMed:26242966).</text>
</comment>
<comment type="domain">
    <text evidence="1">Multidomain protein; including a starter unit:ACP transacylase (SAT) that selects the starter unit; a ketosynthase (KS) that catalyzes repeated decarboxylative condensation to elongate the polyketide backbone; a malonyl-CoA:ACP transacylase (MAT) that selects and transfers the extender unit malonyl-CoA; a product template (PT) domain that controls the immediate cyclization regioselectivity of the reactive polyketide backbone; and an acyl-carrier protein (ACP) that serves as the tether of the growing and completed polyketide via its phosphopantetheinyl arm (By similarity).</text>
</comment>
<comment type="disruption phenotype">
    <text evidence="8 9">Abolishes the production of endocrocin (PubMed:22492455, PubMed:23592999). Leads to attenuated virulence in a toll-deficient Drosophila invasive aspergillosis model (PubMed:23592999).</text>
</comment>
<comment type="biotechnology">
    <text evidence="7">Endocrocin and related anthraquinones compounds have interesting activities for medicinal uses, including anti-inflammatory activity (PubMed:20379952).</text>
</comment>
<accession>Q4W944</accession>
<feature type="chain" id="PRO_0000437047" description="Atrochrysone carboxylic acid synthase">
    <location>
        <begin position="1"/>
        <end position="1775"/>
    </location>
</feature>
<feature type="domain" description="Ketosynthase family 3 (KS3)" evidence="4">
    <location>
        <begin position="391"/>
        <end position="821"/>
    </location>
</feature>
<feature type="domain" description="PKS/mFAS DH" evidence="5">
    <location>
        <begin position="1309"/>
        <end position="1621"/>
    </location>
</feature>
<feature type="domain" description="Carrier" evidence="3">
    <location>
        <begin position="1698"/>
        <end position="1775"/>
    </location>
</feature>
<feature type="region of interest" description="N-terminal acylcarrier protein transacylase domain (SAT)" evidence="2">
    <location>
        <begin position="29"/>
        <end position="258"/>
    </location>
</feature>
<feature type="region of interest" description="Malonyl-CoA:ACP transacylase (MAT) domain" evidence="2">
    <location>
        <begin position="921"/>
        <end position="1241"/>
    </location>
</feature>
<feature type="region of interest" description="Product template (PT) domain" evidence="2">
    <location>
        <begin position="1305"/>
        <end position="1626"/>
    </location>
</feature>
<feature type="region of interest" description="N-terminal hotdog fold" evidence="5">
    <location>
        <begin position="1309"/>
        <end position="1455"/>
    </location>
</feature>
<feature type="region of interest" description="C-terminal hotdog fold" evidence="5">
    <location>
        <begin position="1472"/>
        <end position="1621"/>
    </location>
</feature>
<feature type="region of interest" description="Disordered" evidence="6">
    <location>
        <begin position="1672"/>
        <end position="1694"/>
    </location>
</feature>
<feature type="compositionally biased region" description="Low complexity" evidence="6">
    <location>
        <begin position="1677"/>
        <end position="1689"/>
    </location>
</feature>
<feature type="active site" description="For beta-ketoacyl synthase activity" evidence="4">
    <location>
        <position position="564"/>
    </location>
</feature>
<feature type="active site" description="For beta-ketoacyl synthase activity" evidence="4">
    <location>
        <position position="699"/>
    </location>
</feature>
<feature type="active site" description="For beta-ketoacyl synthase activity" evidence="4">
    <location>
        <position position="740"/>
    </location>
</feature>
<feature type="active site" description="Proton acceptor; for dehydratase activity" evidence="5">
    <location>
        <position position="1341"/>
    </location>
</feature>
<feature type="active site" description="Proton donor; for dehydratase activity" evidence="5">
    <location>
        <position position="1532"/>
    </location>
</feature>
<feature type="modified residue" description="O-(pantetheine 4'-phosphoryl)serine" evidence="3">
    <location>
        <position position="1735"/>
    </location>
</feature>
<reference key="1">
    <citation type="journal article" date="2005" name="Nature">
        <title>Genomic sequence of the pathogenic and allergenic filamentous fungus Aspergillus fumigatus.</title>
        <authorList>
            <person name="Nierman W.C."/>
            <person name="Pain A."/>
            <person name="Anderson M.J."/>
            <person name="Wortman J.R."/>
            <person name="Kim H.S."/>
            <person name="Arroyo J."/>
            <person name="Berriman M."/>
            <person name="Abe K."/>
            <person name="Archer D.B."/>
            <person name="Bermejo C."/>
            <person name="Bennett J.W."/>
            <person name="Bowyer P."/>
            <person name="Chen D."/>
            <person name="Collins M."/>
            <person name="Coulsen R."/>
            <person name="Davies R."/>
            <person name="Dyer P.S."/>
            <person name="Farman M.L."/>
            <person name="Fedorova N."/>
            <person name="Fedorova N.D."/>
            <person name="Feldblyum T.V."/>
            <person name="Fischer R."/>
            <person name="Fosker N."/>
            <person name="Fraser A."/>
            <person name="Garcia J.L."/>
            <person name="Garcia M.J."/>
            <person name="Goble A."/>
            <person name="Goldman G.H."/>
            <person name="Gomi K."/>
            <person name="Griffith-Jones S."/>
            <person name="Gwilliam R."/>
            <person name="Haas B.J."/>
            <person name="Haas H."/>
            <person name="Harris D.E."/>
            <person name="Horiuchi H."/>
            <person name="Huang J."/>
            <person name="Humphray S."/>
            <person name="Jimenez J."/>
            <person name="Keller N."/>
            <person name="Khouri H."/>
            <person name="Kitamoto K."/>
            <person name="Kobayashi T."/>
            <person name="Konzack S."/>
            <person name="Kulkarni R."/>
            <person name="Kumagai T."/>
            <person name="Lafton A."/>
            <person name="Latge J.-P."/>
            <person name="Li W."/>
            <person name="Lord A."/>
            <person name="Lu C."/>
            <person name="Majoros W.H."/>
            <person name="May G.S."/>
            <person name="Miller B.L."/>
            <person name="Mohamoud Y."/>
            <person name="Molina M."/>
            <person name="Monod M."/>
            <person name="Mouyna I."/>
            <person name="Mulligan S."/>
            <person name="Murphy L.D."/>
            <person name="O'Neil S."/>
            <person name="Paulsen I."/>
            <person name="Penalva M.A."/>
            <person name="Pertea M."/>
            <person name="Price C."/>
            <person name="Pritchard B.L."/>
            <person name="Quail M.A."/>
            <person name="Rabbinowitsch E."/>
            <person name="Rawlins N."/>
            <person name="Rajandream M.A."/>
            <person name="Reichard U."/>
            <person name="Renauld H."/>
            <person name="Robson G.D."/>
            <person name="Rodriguez de Cordoba S."/>
            <person name="Rodriguez-Pena J.M."/>
            <person name="Ronning C.M."/>
            <person name="Rutter S."/>
            <person name="Salzberg S.L."/>
            <person name="Sanchez M."/>
            <person name="Sanchez-Ferrero J.C."/>
            <person name="Saunders D."/>
            <person name="Seeger K."/>
            <person name="Squares R."/>
            <person name="Squares S."/>
            <person name="Takeuchi M."/>
            <person name="Tekaia F."/>
            <person name="Turner G."/>
            <person name="Vazquez de Aldana C.R."/>
            <person name="Weidman J."/>
            <person name="White O."/>
            <person name="Woodward J.R."/>
            <person name="Yu J.-H."/>
            <person name="Fraser C.M."/>
            <person name="Galagan J.E."/>
            <person name="Asai K."/>
            <person name="Machida M."/>
            <person name="Hall N."/>
            <person name="Barrell B.G."/>
            <person name="Denning D.W."/>
        </authorList>
    </citation>
    <scope>NUCLEOTIDE SEQUENCE [LARGE SCALE GENOMIC DNA]</scope>
    <source>
        <strain>ATCC MYA-4609 / CBS 101355 / FGSC A1100 / Af293</strain>
    </source>
</reference>
<reference key="2">
    <citation type="journal article" date="2010" name="Planta Med.">
        <title>Anti-inflammatory, cyclooxygenase (COX)-2, COX-1 inhibitory, and free radical scavenging effects of Rumex nepalensis.</title>
        <authorList>
            <person name="Gautam R."/>
            <person name="Karkhile K.V."/>
            <person name="Bhutani K.K."/>
            <person name="Jachak S.M."/>
        </authorList>
    </citation>
    <scope>BIOTECHNOLOGY</scope>
</reference>
<reference key="3">
    <citation type="journal article" date="2012" name="Appl. Environ. Microbiol.">
        <title>Genome-based cluster deletion reveals an endocrocin biosynthetic pathway in Aspergillus fumigatus.</title>
        <authorList>
            <person name="Lim F.Y."/>
            <person name="Hou Y."/>
            <person name="Chen Y."/>
            <person name="Oh J.H."/>
            <person name="Lee I."/>
            <person name="Bugni T.S."/>
            <person name="Keller N.P."/>
        </authorList>
    </citation>
    <scope>FUNCTION</scope>
</reference>
<reference key="4">
    <citation type="journal article" date="2013" name="PLoS Pathog.">
        <title>Low-volume toolbox for the discovery of immunosuppressive fungal secondary metabolites.</title>
        <authorList>
            <person name="Berthier E."/>
            <person name="Lim F.Y."/>
            <person name="Deng Q."/>
            <person name="Guo C.J."/>
            <person name="Kontoyiannis D.P."/>
            <person name="Wang C.C."/>
            <person name="Rindy J."/>
            <person name="Beebe D.J."/>
            <person name="Huttenlocher A."/>
            <person name="Keller N.P."/>
        </authorList>
    </citation>
    <scope>FUNCTION</scope>
    <scope>DISRUPTION PHENOTYPE</scope>
    <scope>TISSUE SPECIFICITY</scope>
</reference>
<reference key="5">
    <citation type="journal article" date="2016" name="Environ. Microbiol.">
        <title>Redundant synthesis of a conidial polyketide by two distinct secondary metabolite clusters in Aspergillus fumigatus.</title>
        <authorList>
            <person name="Throckmorton K."/>
            <person name="Lim F.Y."/>
            <person name="Kontoyiannis D.P."/>
            <person name="Zheng W."/>
            <person name="Keller N.P."/>
        </authorList>
    </citation>
    <scope>INDUCTION</scope>
</reference>
<proteinExistence type="evidence at protein level"/>
<protein>
    <recommendedName>
        <fullName evidence="12">Atrochrysone carboxylic acid synthase</fullName>
        <shortName evidence="12">ACAS</shortName>
        <ecNumber evidence="12">2.3.1.-</ecNumber>
    </recommendedName>
    <alternativeName>
        <fullName evidence="11">Endocrocin synthesis protein A</fullName>
    </alternativeName>
    <alternativeName>
        <fullName evidence="11">Non-reducing polyketide synthase encA</fullName>
    </alternativeName>
</protein>
<sequence length="1775" mass="194076">MQGPSQLALFYFANGLPPDDIQDLFQRLRSQSKTESGWTLRAFVVQATNALREEIRQLPHHLRNPLTPLDNALDLAVVPDWRRGPLAGALEGVLLCLIEIGSLIAYYERTPDPFKFSARTACFTGIGTGLLAAAAAAASPTLADLPRLGAAAVRIALRMGVLVAETSQSVEAREPDAPADNWAAVVMDLDEDTVREELNLFNASTNNLGPSRLFISAGGTDNVTISGPPSKLRQVFRVSEKLRSARYAQLPVYGGLCHAPHLYNCHHWTWIMEPINGAAFNQNMVDTAPLFSAGDDVPFEASTPRQLFESVVCDLLMGMIRWNRAVDGVVELLGQTLPSECQVYAFRPCAVVTGMVASGQVKLPHCQFQTHDLLGWTCHDDTDNGPTCREDSSIAIVGMACRFPGGANDLNQFWDLLEQGADVHRRVPADRYDVESHTDTSGKSRNTSLTPFGCFIDQPGLFDAGFFDMSPREAMQTDPMHRLALMTAYEALEQAGFVPNRTESTHLKRIGTFYGQSCDDYREANAGQEVDTYYIPGGCRAFAPGRINYFFKFSGPSFDCDTACSSSLATIQMACTSLQHGDTNMAVAGGLNILTNSDGFAGLSRGHFLSKTGGCKTFDCNADGYCRADGIGSIVLKRLDDAQRDNDHIFGIILAAATNHSARAISITHPHAPSQAELYRDILTRAGVSPLDVDFIEMHGTGTQAGDSTEMESITSVFSPGVPKRSRPLYIGSVKANVGHGEAAAGVMSLIKVLLVLQRQAIPKHVGIKTALNPRFPNLDRLNVRIPHDQVPWPRSPTRKRYALVNNFSAAGGNTSLLIEEPPVRPEPKADPRAAFTVAVSAKSKASLKNNLRSFLAYLESQPSISLAHLSYTTTARRMHHNHRIAVHGSTLSSIMQELEPYLPAVDTHRPVPNTPPSIAFVFSGQGSFYTGIARQLYEHHPGFRLQITRLHNICLSHGFPSFRRAITGDLSNDGSEAEPIITHLTIVCVSIALCRLWETLGVKPCVVAGASLGEFAALYAAGVLSASDAIYLVGRRAQLLQELCTPNTHAMLAVRATVEQIRNVLAGQPYEVACINGSSDITLSCSVADIINLQLAIEQHGYKCTRLDVPFAFHSAQMDPLLGPFEHIARGVTFKAPNIPVMSPSLGDCVFDGKTINASYMCNVTRNPVKFVDALETARGMDLVDAKTVWVEIGPHASYSRFVGSAMPPGTATIASLNRNEDNWSTFARSMAQLHNLGVDLNWHEWHAPFESELRLLTDLPAYQWNMKNYWIQYNGDWMLRKDGKSSAAAASHPHQAIPPALRTSLVHRLVCESVQETRVEVIVESDILHPDFFEAMNGHRMNGCAVATTAIHADIAFTLAKYLYSSIMPNSTDAPAINVKNMQVQHGLVARKDRSRPQLIRIRGIADVTRGLVSLSWHLVDEQGRRVEESFATAVAEFGNHEAWLEEWSPMTHLVVSRIDVLQRLADDGTANRLSRDMVYMLFNNLVDYAEKYRGMQMVVLHGLEAMANVTLAAPEQSGGKWTVAPHYIDSVVHLAGFILNGGNGLDPRRNFYVTPGWKSMRFARPLVPGVRYQSYVKMMPIREQSGFYAGDVYILHEGQIVGLVGGITFRTFPRSLINTFFSPPDTMTHGGSQAGSVHQPACSERTLPVGPARQDSAARETLCQGHGLSRTVMDSSDSSPATTLTPPTLPSVAASTESPIVHRAMALIAAETAIELTELSDETAFSSIGVDSLLSLVLAEKFTAEFHLDFRSSLFLDCPTIGDLKAWLIDYC</sequence>
<gene>
    <name evidence="11" type="primary">encA</name>
    <name type="ORF">AFUA_4G00210</name>
</gene>